<keyword id="KW-0106">Calcium</keyword>
<keyword id="KW-1003">Cell membrane</keyword>
<keyword id="KW-0406">Ion transport</keyword>
<keyword id="KW-0460">Magnesium</keyword>
<keyword id="KW-0472">Membrane</keyword>
<keyword id="KW-0479">Metal-binding</keyword>
<keyword id="KW-0630">Potassium</keyword>
<keyword id="KW-0915">Sodium</keyword>
<keyword id="KW-0739">Sodium transport</keyword>
<keyword id="KW-1278">Translocase</keyword>
<keyword id="KW-0812">Transmembrane</keyword>
<keyword id="KW-1133">Transmembrane helix</keyword>
<keyword id="KW-0813">Transport</keyword>
<sequence length="672" mass="68449">MELLAPLTGIVALLFAFYLTNKINRSDPGNPRMQEIAVAIHEGAMAFLMREYRTLIFFVLGMTALIVVAGFMTRGAESMQPATAIAYVAGTLCSIGAGYIGMQVATRANVRTANAARHSSNAALDIAFSGGSVMGMAVVGLGLLGLGIINYVFKNPSIVNGFALGASSIALFARVGGGIYTKAADVGADLVGKVEAGIPEDDPRNPAVIADNVGDNVGDVAGMGADLFESYVGSIISGIALAAALNIPNGTLVPLMIAAIGIVSSILGAFFVKTGEGANAQKALNTGTMVASILAIVGTFLATRLLPAHFTAGSMSYTSTGVFAATIAGLIAGVLIGRITEYYTSGDYEPVKEIAKASQTGTATNIIEGLSTGMLSTVLPILVIVIAIIASYRFAGLYGIAMAAVGMLSTTGTTVAVDAYGPIADNAGGIAEMAELDPKVRKITDALDSVGNTTAAIGKGFAIGSAALTALALFSAYTAAARITAIDLTDPKVVGGLFIGGMLPFLFAALTMKAVGRAAFQMIEEVRRQFKSIPGLMEGKARPDYARCVAISTGAAIKEMIVPGLLAVLVPLAVGLIPGLGKEALGGLLAGATVTGFLMAVMMANAGGAWDNAKKYIEGGQYGGKGSPAHAAAVNGDTVGDPFKDTSGPAMNILIKLMTIVSLVFAPLFMQL</sequence>
<protein>
    <recommendedName>
        <fullName evidence="2">Putative K(+)-stimulated pyrophosphate-energized sodium pump 1</fullName>
        <ecNumber evidence="2 3">7.2.3.1</ecNumber>
    </recommendedName>
    <alternativeName>
        <fullName evidence="2">Membrane-bound sodium-translocating pyrophosphatase 1</fullName>
    </alternativeName>
    <alternativeName>
        <fullName evidence="2">Pyrophosphate-energized inorganic pyrophosphatase 1</fullName>
        <shortName evidence="2">Na(+)-PPase 1</shortName>
    </alternativeName>
</protein>
<organism>
    <name type="scientific">Moorella thermoacetica (strain ATCC 39073 / JCM 9320)</name>
    <dbReference type="NCBI Taxonomy" id="264732"/>
    <lineage>
        <taxon>Bacteria</taxon>
        <taxon>Bacillati</taxon>
        <taxon>Bacillota</taxon>
        <taxon>Clostridia</taxon>
        <taxon>Moorellales</taxon>
        <taxon>Moorellaceae</taxon>
        <taxon>Moorella</taxon>
    </lineage>
</organism>
<comment type="function">
    <text evidence="2 3">Sodium pump that utilizes the energy of pyrophosphate hydrolysis as the driving force for Na(+) movement across the membrane.</text>
</comment>
<comment type="catalytic activity">
    <reaction evidence="2 3">
        <text>Na(+)(in) + diphosphate + H2O = Na(+)(out) + 2 phosphate + H(+)</text>
        <dbReference type="Rhea" id="RHEA:57884"/>
        <dbReference type="ChEBI" id="CHEBI:15377"/>
        <dbReference type="ChEBI" id="CHEBI:15378"/>
        <dbReference type="ChEBI" id="CHEBI:29101"/>
        <dbReference type="ChEBI" id="CHEBI:33019"/>
        <dbReference type="ChEBI" id="CHEBI:43474"/>
        <dbReference type="EC" id="7.2.3.1"/>
    </reaction>
</comment>
<comment type="cofactor">
    <cofactor evidence="2">
        <name>Mg(2+)</name>
        <dbReference type="ChEBI" id="CHEBI:18420"/>
    </cofactor>
</comment>
<comment type="activity regulation">
    <text evidence="2 3">Requires K(+) for maximal activity.</text>
</comment>
<comment type="subunit">
    <text evidence="2">Homodimer.</text>
</comment>
<comment type="subcellular location">
    <subcellularLocation>
        <location evidence="2">Cell membrane</location>
        <topology evidence="2">Multi-pass membrane protein</topology>
    </subcellularLocation>
</comment>
<comment type="similarity">
    <text evidence="2">Belongs to the H(+)-translocating pyrophosphatase (TC 3.A.10) family. K(+)-stimulated subfamily.</text>
</comment>
<dbReference type="EC" id="7.2.3.1" evidence="2 3"/>
<dbReference type="EMBL" id="CP000232">
    <property type="protein sequence ID" value="ABC19662.1"/>
    <property type="molecule type" value="Genomic_DNA"/>
</dbReference>
<dbReference type="RefSeq" id="YP_430205.1">
    <property type="nucleotide sequence ID" value="NC_007644.1"/>
</dbReference>
<dbReference type="SMR" id="Q2RIS7"/>
<dbReference type="STRING" id="264732.Moth_1349"/>
<dbReference type="TCDB" id="3.A.10.1.3">
    <property type="family name" value="the h(+), na(+)-translocating pyrophosphatase (m(+)-ppase) family"/>
</dbReference>
<dbReference type="EnsemblBacteria" id="ABC19662">
    <property type="protein sequence ID" value="ABC19662"/>
    <property type="gene ID" value="Moth_1349"/>
</dbReference>
<dbReference type="KEGG" id="mta:Moth_1349"/>
<dbReference type="PATRIC" id="fig|264732.11.peg.1448"/>
<dbReference type="eggNOG" id="COG3808">
    <property type="taxonomic scope" value="Bacteria"/>
</dbReference>
<dbReference type="HOGENOM" id="CLU_008743_3_1_9"/>
<dbReference type="OrthoDB" id="9808652at2"/>
<dbReference type="BRENDA" id="7.1.3.2">
    <property type="organism ID" value="1528"/>
</dbReference>
<dbReference type="GO" id="GO:0005886">
    <property type="term" value="C:plasma membrane"/>
    <property type="evidence" value="ECO:0007669"/>
    <property type="project" value="UniProtKB-SubCell"/>
</dbReference>
<dbReference type="GO" id="GO:0009678">
    <property type="term" value="F:diphosphate hydrolysis-driven proton transmembrane transporter activity"/>
    <property type="evidence" value="ECO:0007669"/>
    <property type="project" value="UniProtKB-UniRule"/>
</dbReference>
<dbReference type="GO" id="GO:0004427">
    <property type="term" value="F:inorganic diphosphate phosphatase activity"/>
    <property type="evidence" value="ECO:0007669"/>
    <property type="project" value="UniProtKB-UniRule"/>
</dbReference>
<dbReference type="GO" id="GO:0000287">
    <property type="term" value="F:magnesium ion binding"/>
    <property type="evidence" value="ECO:0007669"/>
    <property type="project" value="UniProtKB-UniRule"/>
</dbReference>
<dbReference type="GO" id="GO:0030955">
    <property type="term" value="F:potassium ion binding"/>
    <property type="evidence" value="ECO:0007669"/>
    <property type="project" value="UniProtKB-UniRule"/>
</dbReference>
<dbReference type="GO" id="GO:0006814">
    <property type="term" value="P:sodium ion transport"/>
    <property type="evidence" value="ECO:0007669"/>
    <property type="project" value="UniProtKB-UniRule"/>
</dbReference>
<dbReference type="HAMAP" id="MF_01129">
    <property type="entry name" value="PPase_energized_pump"/>
    <property type="match status" value="1"/>
</dbReference>
<dbReference type="InterPro" id="IPR004131">
    <property type="entry name" value="PPase-energised_H-pump"/>
</dbReference>
<dbReference type="NCBIfam" id="NF001953">
    <property type="entry name" value="PRK00733.2-1"/>
    <property type="match status" value="1"/>
</dbReference>
<dbReference type="NCBIfam" id="NF001960">
    <property type="entry name" value="PRK00733.3-5"/>
    <property type="match status" value="1"/>
</dbReference>
<dbReference type="NCBIfam" id="TIGR01104">
    <property type="entry name" value="V_PPase"/>
    <property type="match status" value="1"/>
</dbReference>
<dbReference type="PANTHER" id="PTHR31998">
    <property type="entry name" value="K(+)-INSENSITIVE PYROPHOSPHATE-ENERGIZED PROTON PUMP"/>
    <property type="match status" value="1"/>
</dbReference>
<dbReference type="Pfam" id="PF03030">
    <property type="entry name" value="H_PPase"/>
    <property type="match status" value="1"/>
</dbReference>
<dbReference type="PIRSF" id="PIRSF001265">
    <property type="entry name" value="H+-PPase"/>
    <property type="match status" value="1"/>
</dbReference>
<name>HPPA1_MOOTA</name>
<reference key="1">
    <citation type="journal article" date="2008" name="Environ. Microbiol.">
        <title>The complete genome sequence of Moorella thermoacetica (f. Clostridium thermoaceticum).</title>
        <authorList>
            <person name="Pierce E."/>
            <person name="Xie G."/>
            <person name="Barabote R.D."/>
            <person name="Saunders E."/>
            <person name="Han C.S."/>
            <person name="Detter J.C."/>
            <person name="Richardson P."/>
            <person name="Brettin T.S."/>
            <person name="Das A."/>
            <person name="Ljungdahl L.G."/>
            <person name="Ragsdale S.W."/>
        </authorList>
    </citation>
    <scope>NUCLEOTIDE SEQUENCE [LARGE SCALE GENOMIC DNA]</scope>
    <source>
        <strain>ATCC 39073 / JCM 9320</strain>
    </source>
</reference>
<reference key="2">
    <citation type="journal article" date="2007" name="Biochemistry">
        <title>Na+-pyrophosphatase: a novel primary sodium pump.</title>
        <authorList>
            <person name="Malinen A.M."/>
            <person name="Belogurov G.A."/>
            <person name="Baykov A.A."/>
            <person name="Lahti R."/>
        </authorList>
    </citation>
    <scope>FUNCTION</scope>
    <scope>CATALYTIC ACTIVITY</scope>
    <scope>ACTIVITY REGULATION</scope>
</reference>
<gene>
    <name evidence="2" type="primary">hppA1</name>
    <name type="ordered locus">Moth_1349</name>
</gene>
<feature type="chain" id="PRO_0000401182" description="Putative K(+)-stimulated pyrophosphate-energized sodium pump 1">
    <location>
        <begin position="1"/>
        <end position="672"/>
    </location>
</feature>
<feature type="transmembrane region" description="Helical" evidence="2">
    <location>
        <begin position="1"/>
        <end position="21"/>
    </location>
</feature>
<feature type="transmembrane region" description="Helical" evidence="2">
    <location>
        <begin position="55"/>
        <end position="75"/>
    </location>
</feature>
<feature type="transmembrane region" description="Helical" evidence="2">
    <location>
        <begin position="82"/>
        <end position="102"/>
    </location>
</feature>
<feature type="transmembrane region" description="Helical" evidence="2">
    <location>
        <begin position="133"/>
        <end position="153"/>
    </location>
</feature>
<feature type="transmembrane region" description="Helical" evidence="2">
    <location>
        <begin position="158"/>
        <end position="178"/>
    </location>
</feature>
<feature type="transmembrane region" description="Helical" evidence="2">
    <location>
        <begin position="227"/>
        <end position="247"/>
    </location>
</feature>
<feature type="transmembrane region" description="Helical" evidence="2">
    <location>
        <begin position="252"/>
        <end position="272"/>
    </location>
</feature>
<feature type="transmembrane region" description="Helical" evidence="2">
    <location>
        <begin position="283"/>
        <end position="303"/>
    </location>
</feature>
<feature type="transmembrane region" description="Helical" evidence="2">
    <location>
        <begin position="317"/>
        <end position="337"/>
    </location>
</feature>
<feature type="transmembrane region" description="Helical" evidence="2">
    <location>
        <begin position="370"/>
        <end position="390"/>
    </location>
</feature>
<feature type="transmembrane region" description="Helical" evidence="2">
    <location>
        <begin position="397"/>
        <end position="417"/>
    </location>
</feature>
<feature type="transmembrane region" description="Helical" evidence="2">
    <location>
        <begin position="461"/>
        <end position="481"/>
    </location>
</feature>
<feature type="transmembrane region" description="Helical" evidence="2">
    <location>
        <begin position="492"/>
        <end position="512"/>
    </location>
</feature>
<feature type="transmembrane region" description="Helical" evidence="2">
    <location>
        <begin position="560"/>
        <end position="580"/>
    </location>
</feature>
<feature type="transmembrane region" description="Helical" evidence="2">
    <location>
        <begin position="584"/>
        <end position="604"/>
    </location>
</feature>
<feature type="transmembrane region" description="Helical" evidence="2">
    <location>
        <begin position="650"/>
        <end position="670"/>
    </location>
</feature>
<feature type="binding site" evidence="1">
    <location>
        <position position="182"/>
    </location>
    <ligand>
        <name>substrate</name>
    </ligand>
</feature>
<feature type="binding site" evidence="1">
    <location>
        <position position="185"/>
    </location>
    <ligand>
        <name>Mg(2+)</name>
        <dbReference type="ChEBI" id="CHEBI:18420"/>
        <label>1</label>
    </ligand>
</feature>
<feature type="binding site" evidence="1">
    <location>
        <position position="189"/>
    </location>
    <ligand>
        <name>Mg(2+)</name>
        <dbReference type="ChEBI" id="CHEBI:18420"/>
        <label>1</label>
    </ligand>
</feature>
<feature type="binding site" evidence="1">
    <location>
        <position position="212"/>
    </location>
    <ligand>
        <name>Mg(2+)</name>
        <dbReference type="ChEBI" id="CHEBI:18420"/>
        <label>2</label>
    </ligand>
</feature>
<feature type="binding site" evidence="1">
    <location>
        <position position="215"/>
    </location>
    <ligand>
        <name>Mg(2+)</name>
        <dbReference type="ChEBI" id="CHEBI:18420"/>
        <label>2</label>
    </ligand>
</feature>
<feature type="binding site" evidence="1">
    <location>
        <position position="425"/>
    </location>
    <ligand>
        <name>Mg(2+)</name>
        <dbReference type="ChEBI" id="CHEBI:18420"/>
        <label>2</label>
    </ligand>
</feature>
<feature type="binding site" evidence="1">
    <location>
        <position position="611"/>
    </location>
    <ligand>
        <name>Ca(2+)</name>
        <dbReference type="ChEBI" id="CHEBI:29108"/>
    </ligand>
</feature>
<feature type="binding site" evidence="1">
    <location>
        <position position="637"/>
    </location>
    <ligand>
        <name>Ca(2+)</name>
        <dbReference type="ChEBI" id="CHEBI:29108"/>
    </ligand>
</feature>
<feature type="binding site" evidence="1">
    <location>
        <position position="641"/>
    </location>
    <ligand>
        <name>Ca(2+)</name>
        <dbReference type="ChEBI" id="CHEBI:29108"/>
    </ligand>
</feature>
<feature type="binding site" evidence="1">
    <location>
        <position position="644"/>
    </location>
    <ligand>
        <name>substrate</name>
    </ligand>
</feature>
<feature type="site" description="Important for ion transport" evidence="1">
    <location>
        <position position="174"/>
    </location>
</feature>
<feature type="site" description="Important for ion transport" evidence="1">
    <location>
        <position position="219"/>
    </location>
</feature>
<feature type="site" description="Important for ion transport" evidence="1">
    <location>
        <position position="226"/>
    </location>
</feature>
<feature type="site" description="Determinant of potassium dependence" evidence="2">
    <location>
        <position position="455"/>
    </location>
</feature>
<feature type="site" description="Important for ion transport" evidence="1">
    <location>
        <position position="645"/>
    </location>
</feature>
<feature type="site" description="Important for ion transport" evidence="1">
    <location>
        <position position="656"/>
    </location>
</feature>
<proteinExistence type="evidence at protein level"/>
<evidence type="ECO:0000250" key="1"/>
<evidence type="ECO:0000255" key="2">
    <source>
        <dbReference type="HAMAP-Rule" id="MF_01129"/>
    </source>
</evidence>
<evidence type="ECO:0000269" key="3">
    <source>
    </source>
</evidence>
<accession>Q2RIS7</accession>